<accession>Q0I387</accession>
<sequence length="341" mass="36142">MQGYSLLELAQQIGATIRGNADVIVTDIAPLDKADNNQLTFISNPKFREHLLQSQAGALIVTESDIEFCSAQSNLLVVKDPYVAYAILAQYMDSTPKAAQGIHQSAVVSDTATLGQHVSIGANAVIEDGVILGDNVVIGAGCFIGKHVQIGENTQLWANVNIYHDVKIGSDCLIQSGAVIGSDGFGYANDRGRWIKIPQTGTVIIGNHVEIGACTCIDRGALDATVIEDNVIIDNLCQIAHNVHIGTGTAVAGGVIMAGSLKVGRYCLIGGASVINGHMEICDKVTITGMGMVMRPITEPGIYSSGIPLQPNKVWRKTAALTLDIDKINKRLKAVEKKLAE</sequence>
<evidence type="ECO:0000255" key="1">
    <source>
        <dbReference type="HAMAP-Rule" id="MF_00523"/>
    </source>
</evidence>
<proteinExistence type="inferred from homology"/>
<reference key="1">
    <citation type="journal article" date="2007" name="J. Bacteriol.">
        <title>Complete genome sequence of Haemophilus somnus (Histophilus somni) strain 129Pt and comparison to Haemophilus ducreyi 35000HP and Haemophilus influenzae Rd.</title>
        <authorList>
            <person name="Challacombe J.F."/>
            <person name="Duncan A.J."/>
            <person name="Brettin T.S."/>
            <person name="Bruce D."/>
            <person name="Chertkov O."/>
            <person name="Detter J.C."/>
            <person name="Han C.S."/>
            <person name="Misra M."/>
            <person name="Richardson P."/>
            <person name="Tapia R."/>
            <person name="Thayer N."/>
            <person name="Xie G."/>
            <person name="Inzana T.J."/>
        </authorList>
    </citation>
    <scope>NUCLEOTIDE SEQUENCE [LARGE SCALE GENOMIC DNA]</scope>
    <source>
        <strain>129Pt</strain>
    </source>
</reference>
<gene>
    <name evidence="1" type="primary">lpxD</name>
    <name type="ordered locus">HS_0978</name>
</gene>
<protein>
    <recommendedName>
        <fullName evidence="1">UDP-3-O-acylglucosamine N-acyltransferase</fullName>
        <ecNumber evidence="1">2.3.1.191</ecNumber>
    </recommendedName>
</protein>
<comment type="function">
    <text evidence="1">Catalyzes the N-acylation of UDP-3-O-acylglucosamine using 3-hydroxyacyl-ACP as the acyl donor. Is involved in the biosynthesis of lipid A, a phosphorylated glycolipid that anchors the lipopolysaccharide to the outer membrane of the cell.</text>
</comment>
<comment type="catalytic activity">
    <reaction evidence="1">
        <text>a UDP-3-O-[(3R)-3-hydroxyacyl]-alpha-D-glucosamine + a (3R)-hydroxyacyl-[ACP] = a UDP-2-N,3-O-bis[(3R)-3-hydroxyacyl]-alpha-D-glucosamine + holo-[ACP] + H(+)</text>
        <dbReference type="Rhea" id="RHEA:53836"/>
        <dbReference type="Rhea" id="RHEA-COMP:9685"/>
        <dbReference type="Rhea" id="RHEA-COMP:9945"/>
        <dbReference type="ChEBI" id="CHEBI:15378"/>
        <dbReference type="ChEBI" id="CHEBI:64479"/>
        <dbReference type="ChEBI" id="CHEBI:78827"/>
        <dbReference type="ChEBI" id="CHEBI:137740"/>
        <dbReference type="ChEBI" id="CHEBI:137748"/>
        <dbReference type="EC" id="2.3.1.191"/>
    </reaction>
</comment>
<comment type="pathway">
    <text evidence="1">Bacterial outer membrane biogenesis; LPS lipid A biosynthesis.</text>
</comment>
<comment type="subunit">
    <text evidence="1">Homotrimer.</text>
</comment>
<comment type="similarity">
    <text evidence="1">Belongs to the transferase hexapeptide repeat family. LpxD subfamily.</text>
</comment>
<dbReference type="EC" id="2.3.1.191" evidence="1"/>
<dbReference type="EMBL" id="CP000436">
    <property type="protein sequence ID" value="ABI25253.1"/>
    <property type="molecule type" value="Genomic_DNA"/>
</dbReference>
<dbReference type="SMR" id="Q0I387"/>
<dbReference type="KEGG" id="hso:HS_0978"/>
<dbReference type="eggNOG" id="COG1044">
    <property type="taxonomic scope" value="Bacteria"/>
</dbReference>
<dbReference type="HOGENOM" id="CLU_049865_0_1_6"/>
<dbReference type="UniPathway" id="UPA00973"/>
<dbReference type="GO" id="GO:0016020">
    <property type="term" value="C:membrane"/>
    <property type="evidence" value="ECO:0007669"/>
    <property type="project" value="GOC"/>
</dbReference>
<dbReference type="GO" id="GO:0016410">
    <property type="term" value="F:N-acyltransferase activity"/>
    <property type="evidence" value="ECO:0007669"/>
    <property type="project" value="InterPro"/>
</dbReference>
<dbReference type="GO" id="GO:0009245">
    <property type="term" value="P:lipid A biosynthetic process"/>
    <property type="evidence" value="ECO:0007669"/>
    <property type="project" value="UniProtKB-UniRule"/>
</dbReference>
<dbReference type="CDD" id="cd03352">
    <property type="entry name" value="LbH_LpxD"/>
    <property type="match status" value="1"/>
</dbReference>
<dbReference type="FunFam" id="2.160.10.10:FF:000005">
    <property type="entry name" value="UDP-3-O-(3-hydroxymyristoyl)glucosamine N-acyltransferase"/>
    <property type="match status" value="1"/>
</dbReference>
<dbReference type="Gene3D" id="1.20.5.170">
    <property type="match status" value="1"/>
</dbReference>
<dbReference type="Gene3D" id="2.160.10.10">
    <property type="entry name" value="Hexapeptide repeat proteins"/>
    <property type="match status" value="1"/>
</dbReference>
<dbReference type="Gene3D" id="3.40.1390.10">
    <property type="entry name" value="MurE/MurF, N-terminal domain"/>
    <property type="match status" value="1"/>
</dbReference>
<dbReference type="HAMAP" id="MF_00523">
    <property type="entry name" value="LpxD"/>
    <property type="match status" value="1"/>
</dbReference>
<dbReference type="InterPro" id="IPR001451">
    <property type="entry name" value="Hexapep"/>
</dbReference>
<dbReference type="InterPro" id="IPR018357">
    <property type="entry name" value="Hexapep_transf_CS"/>
</dbReference>
<dbReference type="InterPro" id="IPR007691">
    <property type="entry name" value="LpxD"/>
</dbReference>
<dbReference type="InterPro" id="IPR011004">
    <property type="entry name" value="Trimer_LpxA-like_sf"/>
</dbReference>
<dbReference type="InterPro" id="IPR020573">
    <property type="entry name" value="UDP_GlcNAc_AcTrfase_non-rep"/>
</dbReference>
<dbReference type="NCBIfam" id="TIGR01853">
    <property type="entry name" value="lipid_A_lpxD"/>
    <property type="match status" value="1"/>
</dbReference>
<dbReference type="NCBIfam" id="NF002060">
    <property type="entry name" value="PRK00892.1"/>
    <property type="match status" value="1"/>
</dbReference>
<dbReference type="PANTHER" id="PTHR43378">
    <property type="entry name" value="UDP-3-O-ACYLGLUCOSAMINE N-ACYLTRANSFERASE"/>
    <property type="match status" value="1"/>
</dbReference>
<dbReference type="PANTHER" id="PTHR43378:SF2">
    <property type="entry name" value="UDP-3-O-ACYLGLUCOSAMINE N-ACYLTRANSFERASE 1, MITOCHONDRIAL-RELATED"/>
    <property type="match status" value="1"/>
</dbReference>
<dbReference type="Pfam" id="PF00132">
    <property type="entry name" value="Hexapep"/>
    <property type="match status" value="2"/>
</dbReference>
<dbReference type="Pfam" id="PF04613">
    <property type="entry name" value="LpxD"/>
    <property type="match status" value="1"/>
</dbReference>
<dbReference type="SUPFAM" id="SSF51161">
    <property type="entry name" value="Trimeric LpxA-like enzymes"/>
    <property type="match status" value="1"/>
</dbReference>
<dbReference type="PROSITE" id="PS00101">
    <property type="entry name" value="HEXAPEP_TRANSFERASES"/>
    <property type="match status" value="2"/>
</dbReference>
<keyword id="KW-0012">Acyltransferase</keyword>
<keyword id="KW-0441">Lipid A biosynthesis</keyword>
<keyword id="KW-0444">Lipid biosynthesis</keyword>
<keyword id="KW-0443">Lipid metabolism</keyword>
<keyword id="KW-0677">Repeat</keyword>
<keyword id="KW-0808">Transferase</keyword>
<organism>
    <name type="scientific">Histophilus somni (strain 129Pt)</name>
    <name type="common">Haemophilus somnus</name>
    <dbReference type="NCBI Taxonomy" id="205914"/>
    <lineage>
        <taxon>Bacteria</taxon>
        <taxon>Pseudomonadati</taxon>
        <taxon>Pseudomonadota</taxon>
        <taxon>Gammaproteobacteria</taxon>
        <taxon>Pasteurellales</taxon>
        <taxon>Pasteurellaceae</taxon>
        <taxon>Histophilus</taxon>
    </lineage>
</organism>
<name>LPXD_HISS1</name>
<feature type="chain" id="PRO_0000264381" description="UDP-3-O-acylglucosamine N-acyltransferase">
    <location>
        <begin position="1"/>
        <end position="341"/>
    </location>
</feature>
<feature type="active site" description="Proton acceptor" evidence="1">
    <location>
        <position position="241"/>
    </location>
</feature>